<comment type="function">
    <text evidence="1">Is able to inhibit all four classes of proteinases by a unique 'trapping' mechanism. This protein has a peptide stretch, called the 'bait region' which contains specific cleavage sites for different proteinases. When a proteinase cleaves the bait region, a conformational change is induced in the protein which traps the proteinase. The entrapped enzyme remains active against low molecular weight substrates (activity against high molecular weight substrates is greatly reduced). Following cleavage in the bait region a thioester bond is hydrolyzed and mediates the covalent binding of the protein to the proteinase (By similarity).</text>
</comment>
<comment type="subunit">
    <text evidence="1">Homotetramer; disulfide-linked.</text>
</comment>
<comment type="subcellular location">
    <subcellularLocation>
        <location evidence="1">Secreted</location>
    </subcellularLocation>
</comment>
<comment type="tissue specificity">
    <text>Plasma.</text>
</comment>
<comment type="similarity">
    <text evidence="4">Belongs to the protease inhibitor I39 (alpha-2-macroglobulin) family.</text>
</comment>
<evidence type="ECO:0000250" key="1"/>
<evidence type="ECO:0000250" key="2">
    <source>
        <dbReference type="UniProtKB" id="P01023"/>
    </source>
</evidence>
<evidence type="ECO:0000255" key="3"/>
<evidence type="ECO:0000305" key="4"/>
<proteinExistence type="evidence at transcript level"/>
<keyword id="KW-0082">Bait region</keyword>
<keyword id="KW-1015">Disulfide bond</keyword>
<keyword id="KW-0325">Glycoprotein</keyword>
<keyword id="KW-1017">Isopeptide bond</keyword>
<keyword id="KW-0646">Protease inhibitor</keyword>
<keyword id="KW-1185">Reference proteome</keyword>
<keyword id="KW-0964">Secreted</keyword>
<keyword id="KW-0722">Serine protease inhibitor</keyword>
<keyword id="KW-0732">Signal</keyword>
<keyword id="KW-0882">Thioester bond</keyword>
<name>A2MG_PONAB</name>
<protein>
    <recommendedName>
        <fullName>Alpha-2-macroglobulin</fullName>
        <shortName>Alpha-2-M</shortName>
    </recommendedName>
</protein>
<reference key="1">
    <citation type="submission" date="2004-11" db="EMBL/GenBank/DDBJ databases">
        <authorList>
            <consortium name="The German cDNA consortium"/>
        </authorList>
    </citation>
    <scope>NUCLEOTIDE SEQUENCE [LARGE SCALE MRNA]</scope>
    <source>
        <tissue>Brain cortex</tissue>
    </source>
</reference>
<dbReference type="EMBL" id="CR861207">
    <property type="protein sequence ID" value="CAH93278.1"/>
    <property type="molecule type" value="mRNA"/>
</dbReference>
<dbReference type="RefSeq" id="NP_001126929.1">
    <property type="nucleotide sequence ID" value="NM_001133457.1"/>
</dbReference>
<dbReference type="BMRB" id="Q5R4N8"/>
<dbReference type="SMR" id="Q5R4N8"/>
<dbReference type="FunCoup" id="Q5R4N8">
    <property type="interactions" value="584"/>
</dbReference>
<dbReference type="STRING" id="9601.ENSPPYP00000004847"/>
<dbReference type="MEROPS" id="I39.001"/>
<dbReference type="GlyCosmos" id="Q5R4N8">
    <property type="glycosylation" value="8 sites, No reported glycans"/>
</dbReference>
<dbReference type="GeneID" id="100173946"/>
<dbReference type="KEGG" id="pon:100173946"/>
<dbReference type="CTD" id="2"/>
<dbReference type="eggNOG" id="KOG1366">
    <property type="taxonomic scope" value="Eukaryota"/>
</dbReference>
<dbReference type="InParanoid" id="Q5R4N8"/>
<dbReference type="OrthoDB" id="9998011at2759"/>
<dbReference type="Proteomes" id="UP000001595">
    <property type="component" value="Unplaced"/>
</dbReference>
<dbReference type="GO" id="GO:0005615">
    <property type="term" value="C:extracellular space"/>
    <property type="evidence" value="ECO:0007669"/>
    <property type="project" value="InterPro"/>
</dbReference>
<dbReference type="GO" id="GO:0002020">
    <property type="term" value="F:protease binding"/>
    <property type="evidence" value="ECO:0007669"/>
    <property type="project" value="TreeGrafter"/>
</dbReference>
<dbReference type="GO" id="GO:0004867">
    <property type="term" value="F:serine-type endopeptidase inhibitor activity"/>
    <property type="evidence" value="ECO:0007669"/>
    <property type="project" value="UniProtKB-KW"/>
</dbReference>
<dbReference type="CDD" id="cd02897">
    <property type="entry name" value="A2M_2"/>
    <property type="match status" value="1"/>
</dbReference>
<dbReference type="FunFam" id="2.20.130.20:FF:000006">
    <property type="entry name" value="Alpha-2-macroglobulin"/>
    <property type="match status" value="1"/>
</dbReference>
<dbReference type="FunFam" id="2.60.40.1940:FF:000002">
    <property type="entry name" value="Alpha-2-macroglobulin"/>
    <property type="match status" value="1"/>
</dbReference>
<dbReference type="FunFam" id="2.60.40.10:FF:000312">
    <property type="entry name" value="Alpha-2-macroglobulin like 1"/>
    <property type="match status" value="1"/>
</dbReference>
<dbReference type="FunFam" id="1.50.10.20:FF:000001">
    <property type="entry name" value="CD109 isoform 1"/>
    <property type="match status" value="1"/>
</dbReference>
<dbReference type="FunFam" id="2.60.40.1930:FF:000001">
    <property type="entry name" value="CD109 isoform 3"/>
    <property type="match status" value="1"/>
</dbReference>
<dbReference type="FunFam" id="2.60.40.10:FF:000952">
    <property type="entry name" value="PZP, alpha-2-macroglobulin like"/>
    <property type="match status" value="1"/>
</dbReference>
<dbReference type="FunFam" id="2.60.40.1930:FF:000002">
    <property type="entry name" value="PZP, alpha-2-macroglobulin like"/>
    <property type="match status" value="1"/>
</dbReference>
<dbReference type="FunFam" id="2.60.40.690:FF:000001">
    <property type="entry name" value="PZP, alpha-2-macroglobulin like"/>
    <property type="match status" value="1"/>
</dbReference>
<dbReference type="Gene3D" id="1.50.10.20">
    <property type="match status" value="1"/>
</dbReference>
<dbReference type="Gene3D" id="2.20.130.20">
    <property type="match status" value="1"/>
</dbReference>
<dbReference type="Gene3D" id="2.60.120.1540">
    <property type="match status" value="1"/>
</dbReference>
<dbReference type="Gene3D" id="2.60.40.1930">
    <property type="match status" value="2"/>
</dbReference>
<dbReference type="Gene3D" id="2.60.40.1940">
    <property type="match status" value="1"/>
</dbReference>
<dbReference type="Gene3D" id="2.60.40.690">
    <property type="entry name" value="Alpha-macroglobulin, receptor-binding domain"/>
    <property type="match status" value="1"/>
</dbReference>
<dbReference type="Gene3D" id="2.60.40.10">
    <property type="entry name" value="Immunoglobulins"/>
    <property type="match status" value="2"/>
</dbReference>
<dbReference type="InterPro" id="IPR009048">
    <property type="entry name" value="A-macroglobulin_rcpt-bd"/>
</dbReference>
<dbReference type="InterPro" id="IPR036595">
    <property type="entry name" value="A-macroglobulin_rcpt-bd_sf"/>
</dbReference>
<dbReference type="InterPro" id="IPR050473">
    <property type="entry name" value="A2M/Complement_sys"/>
</dbReference>
<dbReference type="InterPro" id="IPR011625">
    <property type="entry name" value="A2M_N_BRD"/>
</dbReference>
<dbReference type="InterPro" id="IPR041813">
    <property type="entry name" value="A2M_TED"/>
</dbReference>
<dbReference type="InterPro" id="IPR047565">
    <property type="entry name" value="Alpha-macroglob_thiol-ester_cl"/>
</dbReference>
<dbReference type="InterPro" id="IPR011626">
    <property type="entry name" value="Alpha-macroglobulin_TED"/>
</dbReference>
<dbReference type="InterPro" id="IPR013783">
    <property type="entry name" value="Ig-like_fold"/>
</dbReference>
<dbReference type="InterPro" id="IPR014756">
    <property type="entry name" value="Ig_E-set"/>
</dbReference>
<dbReference type="InterPro" id="IPR001599">
    <property type="entry name" value="Macroglobln_a2"/>
</dbReference>
<dbReference type="InterPro" id="IPR019742">
    <property type="entry name" value="MacrogloblnA2_CS"/>
</dbReference>
<dbReference type="InterPro" id="IPR002890">
    <property type="entry name" value="MG2"/>
</dbReference>
<dbReference type="InterPro" id="IPR041555">
    <property type="entry name" value="MG3"/>
</dbReference>
<dbReference type="InterPro" id="IPR040839">
    <property type="entry name" value="MG4"/>
</dbReference>
<dbReference type="InterPro" id="IPR008930">
    <property type="entry name" value="Terpenoid_cyclase/PrenylTrfase"/>
</dbReference>
<dbReference type="InterPro" id="IPR010916">
    <property type="entry name" value="TonB_box_CS"/>
</dbReference>
<dbReference type="PANTHER" id="PTHR11412:SF165">
    <property type="entry name" value="ALPHA-2-MACROGLOBULIN"/>
    <property type="match status" value="1"/>
</dbReference>
<dbReference type="PANTHER" id="PTHR11412">
    <property type="entry name" value="MACROGLOBULIN / COMPLEMENT"/>
    <property type="match status" value="1"/>
</dbReference>
<dbReference type="Pfam" id="PF00207">
    <property type="entry name" value="A2M"/>
    <property type="match status" value="1"/>
</dbReference>
<dbReference type="Pfam" id="PF07703">
    <property type="entry name" value="A2M_BRD"/>
    <property type="match status" value="1"/>
</dbReference>
<dbReference type="Pfam" id="PF07677">
    <property type="entry name" value="A2M_recep"/>
    <property type="match status" value="1"/>
</dbReference>
<dbReference type="Pfam" id="PF01835">
    <property type="entry name" value="MG2"/>
    <property type="match status" value="1"/>
</dbReference>
<dbReference type="Pfam" id="PF17791">
    <property type="entry name" value="MG3"/>
    <property type="match status" value="1"/>
</dbReference>
<dbReference type="Pfam" id="PF17789">
    <property type="entry name" value="MG4"/>
    <property type="match status" value="1"/>
</dbReference>
<dbReference type="Pfam" id="PF07678">
    <property type="entry name" value="TED_complement"/>
    <property type="match status" value="1"/>
</dbReference>
<dbReference type="SMART" id="SM01360">
    <property type="entry name" value="A2M"/>
    <property type="match status" value="1"/>
</dbReference>
<dbReference type="SMART" id="SM01359">
    <property type="entry name" value="A2M_N_2"/>
    <property type="match status" value="1"/>
</dbReference>
<dbReference type="SMART" id="SM01361">
    <property type="entry name" value="A2M_recep"/>
    <property type="match status" value="1"/>
</dbReference>
<dbReference type="SMART" id="SM01419">
    <property type="entry name" value="Thiol-ester_cl"/>
    <property type="match status" value="1"/>
</dbReference>
<dbReference type="SUPFAM" id="SSF49410">
    <property type="entry name" value="Alpha-macroglobulin receptor domain"/>
    <property type="match status" value="1"/>
</dbReference>
<dbReference type="SUPFAM" id="SSF81296">
    <property type="entry name" value="E set domains"/>
    <property type="match status" value="1"/>
</dbReference>
<dbReference type="SUPFAM" id="SSF48239">
    <property type="entry name" value="Terpenoid cyclases/Protein prenyltransferases"/>
    <property type="match status" value="1"/>
</dbReference>
<dbReference type="PROSITE" id="PS00477">
    <property type="entry name" value="ALPHA_2_MACROGLOBULIN"/>
    <property type="match status" value="1"/>
</dbReference>
<sequence length="1474" mass="163262">MGKNKLLHPSLVLLLLVLLPTDASVSGKPQYMVLVPSLLHTEAAEKGCVLLSYLNETVTVSASLESVRGNRSLFTDLEAENDVLHCVAFAIPKSSSNEEVMFLTVQVKGPTQEFKKRTTVMVKNEDSLVFVQTDKSIYKPAQTVKFRVVSMDENFHPLNELIPLVYIQDPKGNRIAQWQSFQLEGGLKQFSFPLSSEPFQGSYKVVVQKKSGRRTEHPFTVEEFVLPKFEVQVTVPKIITILEEEMNVSVCGLYTYGKPVPGHVTVSICRKYSDASNCHGEDSQAFCEKFSGQLNSHGCFYQQVKTKVFQLKRKEYEMKLHTKAQIQEEGTVVELTGRQSSEITRTITKLSFVKADSHFRQGIPFFGQVRLVDGKGVPIPNKVIFIRGNEANYYSNATTDEHGLVQFSINTTNVMGTSLTVRVKYKDRSPCYGYQWVSEEHEEAHHTAYLVFSPSKSFVHLEPVSHELPCGQTQTVQAHYILNGGALQGLKKLSFYYLIMAKGGIVRTGTHGLLVKQEDMKGHFSISIPVKSDIAPVARLLIYAVLPTGDVIGDSAKYDVENCLANKVDLSFSPSQSLPALHAHLRVTAAPQSLCALRAVDQSVLLMKPDAELSASSVYNLLPEKDLTGFPGPLNDQGDEDCINRHNVYINGITYTPVSSTNEKDMYSFLEDMGLKAFTNSKIRKPKLCPQLQQYEMHGPEGLRVGFYESDVMGRGHARLVHAEEPPTETVRKYFPETWIWDLVVVNSSGVAEVGVTVPDTITEWKAGAFCLSEDAGLGISSTASLRAFQPFFVELTMPYSVIRGEVFTLKATVLNYLPKCIRVSVQLEASPAFLAVPVEKEQAPHCICANGRQTVSWAITPKSLGNVNFTVSAEALESQELCGTEVASVPEYGKKDTVIKPLLVEPEGLEKETTFNSLLCPSGGEVSEELSLKLPPNVVEESARASVSVLGDILGSAMQNTQNLLQMPYGCGEQNMVLFAPNIYVLDYLNETQQLTPEIKSKAIGYLNTGYQRQLNYKHYDGSYSTFGERYGRNQGNTWLTAFVLKTFAQARAYIFIDEAHITQALIWLSQRQKDNGCFRSSGSLLNNAIKGGVEDEVTLSAYITIALLEIPLTVTHPVVRNALFCLESAWKTAQEGDHGSHVYTKALLAYAFALAGNQDKRKEVLQSLHEEAVKKDNSVHWERPQKPKAPVGHFYEPQAPSAEVEMTSYALLAYLTAQPAPTSEDLTSATNIVKWITKQQNAQGGFSSTQDTVVALHALSKYGAATFTRTGKAAQVTIQSSGTFSNKFQVDNNNRLLLQQVSLPELPGEYSMKVTGEGCVYLQTSLKYNILPEKEEFPFALGVQTLPQTCDEPKAHTSFQISLSVSYTGSRSASNMAIVDVKMVSGFIPLKPTVKMLERSNHVSRTEVSNNHVLIYLDKVSNQTLSLFFTVLQDVPVRDLKPAIVKVYDYYETDEFAIAEYNAPCSKDLGNA</sequence>
<accession>Q5R4N8</accession>
<gene>
    <name type="primary">A2M</name>
</gene>
<feature type="signal peptide" evidence="3">
    <location>
        <begin position="1"/>
        <end position="23"/>
    </location>
</feature>
<feature type="chain" id="PRO_0000042695" description="Alpha-2-macroglobulin">
    <location>
        <begin position="24"/>
        <end position="1474"/>
    </location>
</feature>
<feature type="region of interest" description="Bait region" evidence="1">
    <location>
        <begin position="690"/>
        <end position="728"/>
    </location>
</feature>
<feature type="region of interest" description="Inhibitory" evidence="1">
    <location>
        <begin position="704"/>
        <end position="709"/>
    </location>
</feature>
<feature type="region of interest" description="Inhibitory" evidence="1">
    <location>
        <begin position="719"/>
        <end position="723"/>
    </location>
</feature>
<feature type="region of interest" description="Inhibitory" evidence="1">
    <location>
        <begin position="730"/>
        <end position="735"/>
    </location>
</feature>
<feature type="glycosylation site" description="N-linked (GlcNAc...) asparagine" evidence="1">
    <location>
        <position position="55"/>
    </location>
</feature>
<feature type="glycosylation site" description="N-linked (GlcNAc...) asparagine" evidence="1">
    <location>
        <position position="70"/>
    </location>
</feature>
<feature type="glycosylation site" description="N-linked (GlcNAc...) asparagine" evidence="1">
    <location>
        <position position="247"/>
    </location>
</feature>
<feature type="glycosylation site" description="N-linked (GlcNAc...) asparagine" evidence="1">
    <location>
        <position position="396"/>
    </location>
</feature>
<feature type="glycosylation site" description="N-linked (GlcNAc...) asparagine" evidence="1">
    <location>
        <position position="410"/>
    </location>
</feature>
<feature type="glycosylation site" description="N-linked (GlcNAc...) asparagine" evidence="1">
    <location>
        <position position="869"/>
    </location>
</feature>
<feature type="glycosylation site" description="N-linked (GlcNAc...) asparagine" evidence="1">
    <location>
        <position position="991"/>
    </location>
</feature>
<feature type="glycosylation site" description="N-linked (GlcNAc...) asparagine" evidence="1">
    <location>
        <position position="1424"/>
    </location>
</feature>
<feature type="disulfide bond" evidence="2">
    <location>
        <begin position="48"/>
        <end position="86"/>
    </location>
</feature>
<feature type="disulfide bond" evidence="2">
    <location>
        <begin position="251"/>
        <end position="299"/>
    </location>
</feature>
<feature type="disulfide bond" evidence="2">
    <location>
        <begin position="269"/>
        <end position="287"/>
    </location>
</feature>
<feature type="disulfide bond" description="Interchain (with C-431)" evidence="2">
    <location>
        <position position="278"/>
    </location>
</feature>
<feature type="disulfide bond" description="Interchain (with C-278)" evidence="2">
    <location>
        <position position="431"/>
    </location>
</feature>
<feature type="disulfide bond" evidence="2">
    <location>
        <begin position="470"/>
        <end position="563"/>
    </location>
</feature>
<feature type="disulfide bond" evidence="2">
    <location>
        <begin position="595"/>
        <end position="771"/>
    </location>
</feature>
<feature type="disulfide bond" evidence="2">
    <location>
        <begin position="642"/>
        <end position="689"/>
    </location>
</feature>
<feature type="disulfide bond" evidence="2">
    <location>
        <begin position="821"/>
        <end position="849"/>
    </location>
</feature>
<feature type="disulfide bond" evidence="2">
    <location>
        <begin position="847"/>
        <end position="883"/>
    </location>
</feature>
<feature type="disulfide bond" evidence="2">
    <location>
        <begin position="921"/>
        <end position="1321"/>
    </location>
</feature>
<feature type="disulfide bond" evidence="2">
    <location>
        <begin position="1079"/>
        <end position="1127"/>
    </location>
</feature>
<feature type="disulfide bond" evidence="2">
    <location>
        <begin position="1352"/>
        <end position="1467"/>
    </location>
</feature>
<feature type="cross-link" description="Isoglutamyl lysine isopeptide (Gln-Lys) (interchain with K-? in other proteins)" evidence="3">
    <location>
        <position position="693"/>
    </location>
</feature>
<feature type="cross-link" description="Isoglutamyl lysine isopeptide (Gln-Lys) (interchain with K-? in other proteins)" evidence="3">
    <location>
        <position position="694"/>
    </location>
</feature>
<feature type="cross-link" description="Isoglutamyl cysteine thioester (Cys-Gln)" evidence="1">
    <location>
        <begin position="972"/>
        <end position="975"/>
    </location>
</feature>
<organism>
    <name type="scientific">Pongo abelii</name>
    <name type="common">Sumatran orangutan</name>
    <name type="synonym">Pongo pygmaeus abelii</name>
    <dbReference type="NCBI Taxonomy" id="9601"/>
    <lineage>
        <taxon>Eukaryota</taxon>
        <taxon>Metazoa</taxon>
        <taxon>Chordata</taxon>
        <taxon>Craniata</taxon>
        <taxon>Vertebrata</taxon>
        <taxon>Euteleostomi</taxon>
        <taxon>Mammalia</taxon>
        <taxon>Eutheria</taxon>
        <taxon>Euarchontoglires</taxon>
        <taxon>Primates</taxon>
        <taxon>Haplorrhini</taxon>
        <taxon>Catarrhini</taxon>
        <taxon>Hominidae</taxon>
        <taxon>Pongo</taxon>
    </lineage>
</organism>